<feature type="chain" id="PRO_0000087844" description="Probable alcohol dehydrogenase EutG">
    <location>
        <begin position="1"/>
        <end position="395"/>
    </location>
</feature>
<feature type="binding site" evidence="1">
    <location>
        <position position="57"/>
    </location>
    <ligand>
        <name>NAD(+)</name>
        <dbReference type="ChEBI" id="CHEBI:57540"/>
    </ligand>
</feature>
<feature type="binding site" evidence="1">
    <location>
        <begin position="116"/>
        <end position="120"/>
    </location>
    <ligand>
        <name>NAD(+)</name>
        <dbReference type="ChEBI" id="CHEBI:57540"/>
    </ligand>
</feature>
<feature type="binding site" evidence="1">
    <location>
        <begin position="156"/>
        <end position="160"/>
    </location>
    <ligand>
        <name>NAD(+)</name>
        <dbReference type="ChEBI" id="CHEBI:57540"/>
    </ligand>
</feature>
<feature type="binding site" evidence="1">
    <location>
        <position position="178"/>
    </location>
    <ligand>
        <name>NAD(+)</name>
        <dbReference type="ChEBI" id="CHEBI:57540"/>
    </ligand>
</feature>
<feature type="binding site" evidence="1">
    <location>
        <begin position="197"/>
        <end position="201"/>
    </location>
    <ligand>
        <name>NAD(+)</name>
        <dbReference type="ChEBI" id="CHEBI:57540"/>
    </ligand>
</feature>
<feature type="binding site" evidence="1">
    <location>
        <position position="212"/>
    </location>
    <ligand>
        <name>Fe cation</name>
        <dbReference type="ChEBI" id="CHEBI:24875"/>
    </ligand>
</feature>
<feature type="binding site" evidence="1">
    <location>
        <position position="216"/>
    </location>
    <ligand>
        <name>Fe cation</name>
        <dbReference type="ChEBI" id="CHEBI:24875"/>
    </ligand>
</feature>
<feature type="binding site" evidence="1">
    <location>
        <position position="281"/>
    </location>
    <ligand>
        <name>Fe cation</name>
        <dbReference type="ChEBI" id="CHEBI:24875"/>
    </ligand>
</feature>
<feature type="binding site" evidence="1">
    <location>
        <position position="295"/>
    </location>
    <ligand>
        <name>Fe cation</name>
        <dbReference type="ChEBI" id="CHEBI:24875"/>
    </ligand>
</feature>
<feature type="binding site" evidence="1">
    <location>
        <position position="295"/>
    </location>
    <ligand>
        <name>NAD(+)</name>
        <dbReference type="ChEBI" id="CHEBI:57540"/>
    </ligand>
</feature>
<feature type="binding site" evidence="1">
    <location>
        <position position="354"/>
    </location>
    <ligand>
        <name>NAD(+)</name>
        <dbReference type="ChEBI" id="CHEBI:57540"/>
    </ligand>
</feature>
<feature type="sequence conflict" description="In Ref. 1; AAA80211 and 2; AAC78120." evidence="8" ref="1 2">
    <original>EG</original>
    <variation>D</variation>
    <location>
        <begin position="199"/>
        <end position="200"/>
    </location>
</feature>
<feature type="sequence conflict" description="In Ref. 1; AAA80211 and 2; AAC78120." evidence="8" ref="1 2">
    <original>NATPFTDSLA</original>
    <variation>TPRRLPQPG</variation>
    <location>
        <begin position="225"/>
        <end position="234"/>
    </location>
</feature>
<feature type="sequence conflict" description="In Ref. 1; AAA80211 and 2; AAC78120." evidence="8" ref="1 2">
    <original>QAALEDICLRSN</original>
    <variation>RAGGYLSAQY</variation>
    <location>
        <begin position="367"/>
        <end position="378"/>
    </location>
</feature>
<sequence>MQAELQTALFQAFDTLNLQRVKTFSVPPVTLCGLGALGACGQEAQARGVSHLFVMVDSFLHQAGMTAPLARSLAMKGVAMTVWPCPPGEPCITDVCAAVAQLREAACDGVVAFGGGSVLDAAKAVALLVTNPDQTLSAMTEHSTLRPRLPLIAVPTTAGTGSETTNVTVIIDAVSGRKQVLAHASLMPDVAILDAAVTEGVPPNVTAMTGIDALTHAIEAYSALNATPFTDSLAIGAIAMIGKSLPKAVGYGHDLAARENMLLASCMAGMAFSSAGLGLCHAMAHQPGAALHIPHGQANAMLLPTVMGFNRMVCRERFSQIGRALTNKKSDDRDAIAAVCELIAEVGQSKRLADAGAKPEHYSAWAQAALEDICLRSNPRTATQAQIIDLYAAAG</sequence>
<gene>
    <name evidence="7" type="primary">eutG</name>
    <name type="ordered locus">STM2461</name>
</gene>
<proteinExistence type="evidence at transcript level"/>
<protein>
    <recommendedName>
        <fullName evidence="7">Probable alcohol dehydrogenase EutG</fullName>
        <ecNumber evidence="12">1.1.1.1</ecNumber>
    </recommendedName>
    <alternativeName>
        <fullName>Ethanolamine utilization protein EutG</fullName>
    </alternativeName>
</protein>
<keyword id="KW-1283">Bacterial microcompartment</keyword>
<keyword id="KW-0408">Iron</keyword>
<keyword id="KW-0479">Metal-binding</keyword>
<keyword id="KW-0520">NAD</keyword>
<keyword id="KW-0560">Oxidoreductase</keyword>
<keyword id="KW-1185">Reference proteome</keyword>
<keyword id="KW-0843">Virulence</keyword>
<reference key="1">
    <citation type="journal article" date="1995" name="J. Bacteriol.">
        <title>Ethanolamine utilization in Salmonella typhimurium: nucleotide sequence, protein expression, and mutational analysis of the cchA cchB eutE eutJ eutG eutH gene cluster.</title>
        <authorList>
            <person name="Stojiljkovic I."/>
            <person name="Baeumler A.J."/>
            <person name="Heffron F."/>
        </authorList>
    </citation>
    <scope>NUCLEOTIDE SEQUENCE [GENOMIC DNA]</scope>
    <scope>FUNCTION</scope>
    <scope>DISRUPTION PHENOTYPE</scope>
    <source>
        <strain>ATCC 14028s / SGSG 2262</strain>
    </source>
</reference>
<reference key="2">
    <citation type="journal article" date="1999" name="J. Bacteriol.">
        <title>The 17-gene ethanolamine (eut) operon of Salmonella typhimurium encodes five homologues of carboxysome shell proteins.</title>
        <authorList>
            <person name="Kofoid E.C."/>
            <person name="Rappleye C.A."/>
            <person name="Stojiljkovic I."/>
            <person name="Roth J.R."/>
        </authorList>
    </citation>
    <scope>NUCLEOTIDE SEQUENCE [GENOMIC DNA]</scope>
    <scope>FUNCTION</scope>
    <scope>DISRUPTION PHENOTYPE</scope>
    <source>
        <strain>LT2</strain>
    </source>
</reference>
<reference key="3">
    <citation type="journal article" date="2001" name="Nature">
        <title>Complete genome sequence of Salmonella enterica serovar Typhimurium LT2.</title>
        <authorList>
            <person name="McClelland M."/>
            <person name="Sanderson K.E."/>
            <person name="Spieth J."/>
            <person name="Clifton S.W."/>
            <person name="Latreille P."/>
            <person name="Courtney L."/>
            <person name="Porwollik S."/>
            <person name="Ali J."/>
            <person name="Dante M."/>
            <person name="Du F."/>
            <person name="Hou S."/>
            <person name="Layman D."/>
            <person name="Leonard S."/>
            <person name="Nguyen C."/>
            <person name="Scott K."/>
            <person name="Holmes A."/>
            <person name="Grewal N."/>
            <person name="Mulvaney E."/>
            <person name="Ryan E."/>
            <person name="Sun H."/>
            <person name="Florea L."/>
            <person name="Miller W."/>
            <person name="Stoneking T."/>
            <person name="Nhan M."/>
            <person name="Waterston R."/>
            <person name="Wilson R.K."/>
        </authorList>
    </citation>
    <scope>NUCLEOTIDE SEQUENCE [LARGE SCALE GENOMIC DNA]</scope>
    <source>
        <strain>LT2 / SGSC1412 / ATCC 700720</strain>
    </source>
</reference>
<reference key="4">
    <citation type="journal article" date="1988" name="J. Bacteriol.">
        <title>Ethanolamine utilization in Salmonella typhimurium.</title>
        <authorList>
            <person name="Roof D.M."/>
            <person name="Roth J.R."/>
        </authorList>
    </citation>
    <scope>FUNCTION</scope>
    <scope>PATHWAY</scope>
    <scope>OPERON</scope>
    <scope>INDUCTION BY ETHANOLAMINE AND COBALAMIN</scope>
    <source>
        <strain>LT2</strain>
    </source>
</reference>
<reference key="5">
    <citation type="journal article" date="2006" name="J. Bacteriol.">
        <title>Conserving a volatile metabolite: a role for carboxysome-like organelles in Salmonella enterica.</title>
        <authorList>
            <person name="Penrod J.T."/>
            <person name="Roth J.R."/>
        </authorList>
    </citation>
    <scope>FUNCTION</scope>
    <scope>DISRUPTION PHENOTYPE</scope>
    <source>
        <strain>LT2</strain>
    </source>
</reference>
<reference key="6">
    <citation type="journal article" date="2013" name="J. Bacteriol.">
        <title>Evidence that a metabolic microcompartment contains and recycles private cofactor pools.</title>
        <authorList>
            <person name="Huseby D.L."/>
            <person name="Roth J.R."/>
        </authorList>
    </citation>
    <scope>SUBCELLULAR LOCATION</scope>
    <source>
        <strain>LT2</strain>
    </source>
</reference>
<reference key="7">
    <citation type="journal article" date="2018" name="Infect. Immun.">
        <title>The Ethanolamine Permease EutH Promotes Vacuole Adaptation of Salmonella enterica and Listeria monocytogenes during Macrophage Infection.</title>
        <authorList>
            <person name="Anderson C.J."/>
            <person name="Satkovich J."/>
            <person name="Koeseoglu V.K."/>
            <person name="Agaisse H."/>
            <person name="Kendall M.M."/>
        </authorList>
    </citation>
    <scope>FUNCTION</scope>
    <source>
        <strain>SL1344</strain>
    </source>
</reference>
<name>EUTG_SALTY</name>
<dbReference type="EC" id="1.1.1.1" evidence="12"/>
<dbReference type="EMBL" id="U18560">
    <property type="protein sequence ID" value="AAA80211.1"/>
    <property type="molecule type" value="Genomic_DNA"/>
</dbReference>
<dbReference type="EMBL" id="AF093749">
    <property type="protein sequence ID" value="AAC78120.1"/>
    <property type="molecule type" value="Genomic_DNA"/>
</dbReference>
<dbReference type="EMBL" id="AE006468">
    <property type="protein sequence ID" value="AAL21355.1"/>
    <property type="molecule type" value="Genomic_DNA"/>
</dbReference>
<dbReference type="RefSeq" id="NP_461396.1">
    <property type="nucleotide sequence ID" value="NC_003197.2"/>
</dbReference>
<dbReference type="RefSeq" id="WP_001147500.1">
    <property type="nucleotide sequence ID" value="NC_003197.2"/>
</dbReference>
<dbReference type="SMR" id="P41795"/>
<dbReference type="STRING" id="99287.STM2461"/>
<dbReference type="PaxDb" id="99287-STM2461"/>
<dbReference type="GeneID" id="1253983"/>
<dbReference type="KEGG" id="stm:STM2461"/>
<dbReference type="PATRIC" id="fig|99287.12.peg.2599"/>
<dbReference type="HOGENOM" id="CLU_007207_0_0_6"/>
<dbReference type="OMA" id="PWTVITN"/>
<dbReference type="PhylomeDB" id="P41795"/>
<dbReference type="BioCyc" id="SENT99287:STM2461-MONOMER"/>
<dbReference type="UniPathway" id="UPA00560"/>
<dbReference type="Proteomes" id="UP000001014">
    <property type="component" value="Chromosome"/>
</dbReference>
<dbReference type="GO" id="GO:0031469">
    <property type="term" value="C:bacterial microcompartment"/>
    <property type="evidence" value="ECO:0007669"/>
    <property type="project" value="UniProtKB-SubCell"/>
</dbReference>
<dbReference type="GO" id="GO:0004022">
    <property type="term" value="F:alcohol dehydrogenase (NAD+) activity"/>
    <property type="evidence" value="ECO:0000318"/>
    <property type="project" value="GO_Central"/>
</dbReference>
<dbReference type="GO" id="GO:0120542">
    <property type="term" value="F:ethanol dehydrogenase (NAD+) activity"/>
    <property type="evidence" value="ECO:0007669"/>
    <property type="project" value="RHEA"/>
</dbReference>
<dbReference type="GO" id="GO:0046872">
    <property type="term" value="F:metal ion binding"/>
    <property type="evidence" value="ECO:0007669"/>
    <property type="project" value="UniProtKB-KW"/>
</dbReference>
<dbReference type="GO" id="GO:0046336">
    <property type="term" value="P:ethanolamine catabolic process"/>
    <property type="evidence" value="ECO:0007669"/>
    <property type="project" value="UniProtKB-UniPathway"/>
</dbReference>
<dbReference type="GO" id="GO:0006091">
    <property type="term" value="P:generation of precursor metabolites and energy"/>
    <property type="evidence" value="ECO:0000315"/>
    <property type="project" value="UniProtKB"/>
</dbReference>
<dbReference type="CDD" id="cd08551">
    <property type="entry name" value="Fe-ADH"/>
    <property type="match status" value="1"/>
</dbReference>
<dbReference type="FunFam" id="1.20.1090.10:FF:000001">
    <property type="entry name" value="Aldehyde-alcohol dehydrogenase"/>
    <property type="match status" value="1"/>
</dbReference>
<dbReference type="FunFam" id="3.40.50.1970:FF:000014">
    <property type="entry name" value="Ethanolamine utilization protein EutG"/>
    <property type="match status" value="1"/>
</dbReference>
<dbReference type="Gene3D" id="3.40.50.1970">
    <property type="match status" value="1"/>
</dbReference>
<dbReference type="Gene3D" id="1.20.1090.10">
    <property type="entry name" value="Dehydroquinate synthase-like - alpha domain"/>
    <property type="match status" value="1"/>
</dbReference>
<dbReference type="InterPro" id="IPR001670">
    <property type="entry name" value="ADH_Fe/GldA"/>
</dbReference>
<dbReference type="InterPro" id="IPR056798">
    <property type="entry name" value="ADH_Fe_C"/>
</dbReference>
<dbReference type="InterPro" id="IPR018211">
    <property type="entry name" value="ADH_Fe_CS"/>
</dbReference>
<dbReference type="InterPro" id="IPR039697">
    <property type="entry name" value="Alcohol_dehydrogenase_Fe"/>
</dbReference>
<dbReference type="NCBIfam" id="NF011998">
    <property type="entry name" value="PRK15454.1"/>
    <property type="match status" value="1"/>
</dbReference>
<dbReference type="PANTHER" id="PTHR11496">
    <property type="entry name" value="ALCOHOL DEHYDROGENASE"/>
    <property type="match status" value="1"/>
</dbReference>
<dbReference type="PANTHER" id="PTHR11496:SF94">
    <property type="entry name" value="ALCOHOL DEHYDROGENASE EUTG-RELATED"/>
    <property type="match status" value="1"/>
</dbReference>
<dbReference type="Pfam" id="PF25137">
    <property type="entry name" value="ADH_Fe_C"/>
    <property type="match status" value="1"/>
</dbReference>
<dbReference type="Pfam" id="PF00465">
    <property type="entry name" value="Fe-ADH"/>
    <property type="match status" value="1"/>
</dbReference>
<dbReference type="SUPFAM" id="SSF56796">
    <property type="entry name" value="Dehydroquinate synthase-like"/>
    <property type="match status" value="1"/>
</dbReference>
<dbReference type="PROSITE" id="PS00913">
    <property type="entry name" value="ADH_IRON_1"/>
    <property type="match status" value="1"/>
</dbReference>
<dbReference type="PROSITE" id="PS00060">
    <property type="entry name" value="ADH_IRON_2"/>
    <property type="match status" value="1"/>
</dbReference>
<organism>
    <name type="scientific">Salmonella typhimurium (strain LT2 / SGSC1412 / ATCC 700720)</name>
    <dbReference type="NCBI Taxonomy" id="99287"/>
    <lineage>
        <taxon>Bacteria</taxon>
        <taxon>Pseudomonadati</taxon>
        <taxon>Pseudomonadota</taxon>
        <taxon>Gammaproteobacteria</taxon>
        <taxon>Enterobacterales</taxon>
        <taxon>Enterobacteriaceae</taxon>
        <taxon>Salmonella</taxon>
    </lineage>
</organism>
<comment type="function">
    <text evidence="9 10 12">Probably acts on the acetaldehyde produced by the degradation of ethanolamine, producing ethanol.</text>
</comment>
<comment type="function">
    <text evidence="4 5">Expression of the eut operon allows this bacteria to use ethanolamine (EA) as a carbon, nitrogen and energy source. It relies on cobalamin (vitamin B12) both as a cofactor for the ethanolamine ammonia-lyase (EAL) activity and to induce the operon (PubMed:3045078). EA enhances bacterial survival in macrophages in a concentration-dependent manner, suggesting it is an important nutrient during infection (PubMed:29531136).</text>
</comment>
<comment type="catalytic activity">
    <reaction evidence="9 10 12">
        <text>ethanol + NAD(+) = acetaldehyde + NADH + H(+)</text>
        <dbReference type="Rhea" id="RHEA:25290"/>
        <dbReference type="ChEBI" id="CHEBI:15343"/>
        <dbReference type="ChEBI" id="CHEBI:15378"/>
        <dbReference type="ChEBI" id="CHEBI:16236"/>
        <dbReference type="ChEBI" id="CHEBI:57540"/>
        <dbReference type="ChEBI" id="CHEBI:57945"/>
        <dbReference type="EC" id="1.1.1.1"/>
    </reaction>
</comment>
<comment type="cofactor">
    <cofactor evidence="1">
        <name>Fe cation</name>
        <dbReference type="ChEBI" id="CHEBI:24875"/>
    </cofactor>
</comment>
<comment type="pathway">
    <text evidence="5">Amine and polyamine degradation; ethanolamine degradation.</text>
</comment>
<comment type="subcellular location">
    <subcellularLocation>
        <location evidence="11">Bacterial microcompartment</location>
    </subcellularLocation>
</comment>
<comment type="induction">
    <text evidence="5">Part of the 17-gene eut operon transcribed from a single promoter, induced by ethanolamine and adenosylcobalamin (AdoCbl, vitamin B12).</text>
</comment>
<comment type="disruption phenotype">
    <text evidence="2 3 6">Unable to grow with ethanolamine (EA) as sole carbon source. Slightly attenuated in a mouse model of infection (PubMed:7868611). Not required for aerobic growth on EA supplemented with cobalamin (vitamin B12). A double eutJ-eutG deletion is not required for growth on EA supplemented with vitamin B12 (PubMed:10464203). A non-polar deletion mutant grows on EA at pH 5.5 to pH 7.0 but not at pH 8.0 or pH 8.5, releases increased amounts of acetaldehyde on EA plus vitamin B12. Preventing acetaldehyde vapor loss allow growth up to pH 8.5 (PubMed:16585748).</text>
</comment>
<comment type="similarity">
    <text evidence="8">Belongs to the iron-containing alcohol dehydrogenase family.</text>
</comment>
<accession>P41795</accession>
<evidence type="ECO:0000250" key="1">
    <source>
        <dbReference type="UniProtKB" id="P0A9S1"/>
    </source>
</evidence>
<evidence type="ECO:0000269" key="2">
    <source>
    </source>
</evidence>
<evidence type="ECO:0000269" key="3">
    <source>
    </source>
</evidence>
<evidence type="ECO:0000269" key="4">
    <source>
    </source>
</evidence>
<evidence type="ECO:0000269" key="5">
    <source>
    </source>
</evidence>
<evidence type="ECO:0000269" key="6">
    <source>
    </source>
</evidence>
<evidence type="ECO:0000303" key="7">
    <source>
    </source>
</evidence>
<evidence type="ECO:0000305" key="8"/>
<evidence type="ECO:0000305" key="9">
    <source>
    </source>
</evidence>
<evidence type="ECO:0000305" key="10">
    <source>
    </source>
</evidence>
<evidence type="ECO:0000305" key="11">
    <source>
    </source>
</evidence>
<evidence type="ECO:0000305" key="12">
    <source>
    </source>
</evidence>